<sequence>MISPIKNIKNVFPINTANTEYIVRNIYPRVEHGYFNESPNIYDKKYISGITRSMAQLKIEEFINEKSRRLNYMKTMYSPCPEDFQPISRAEASTPEGSWLTVISGKRPMGQFSVDSLYHPDLHALCELPEISCKIFSKENSDFLYIIVVFRNDSPQGELRANRFIELYDIKREIMQVLRDESPEIKVY</sequence>
<feature type="chain" id="PRO_0000452528" description="Inactive cysteine S-methyltransferase OspZ">
    <location>
        <begin position="1"/>
        <end position="188"/>
    </location>
</feature>
<proteinExistence type="inferred from homology"/>
<evidence type="ECO:0000269" key="1">
    <source>
    </source>
</evidence>
<evidence type="ECO:0000269" key="2">
    <source>
    </source>
</evidence>
<evidence type="ECO:0000303" key="3">
    <source>
    </source>
</evidence>
<evidence type="ECO:0000305" key="4"/>
<evidence type="ECO:0000312" key="5">
    <source>
        <dbReference type="EMBL" id="AAW64923.1"/>
    </source>
</evidence>
<organism>
    <name type="scientific">Shigella flexneri</name>
    <dbReference type="NCBI Taxonomy" id="623"/>
    <lineage>
        <taxon>Bacteria</taxon>
        <taxon>Pseudomonadati</taxon>
        <taxon>Pseudomonadota</taxon>
        <taxon>Gammaproteobacteria</taxon>
        <taxon>Enterobacterales</taxon>
        <taxon>Enterobacteriaceae</taxon>
        <taxon>Shigella</taxon>
    </lineage>
</organism>
<dbReference type="EMBL" id="AY879342">
    <property type="protein sequence ID" value="AAW64923.1"/>
    <property type="status" value="ALT_INIT"/>
    <property type="molecule type" value="Genomic_DNA"/>
</dbReference>
<dbReference type="RefSeq" id="YP_006960392.1">
    <property type="nucleotide sequence ID" value="NC_019197.1"/>
</dbReference>
<dbReference type="SMR" id="Q2TH00"/>
<dbReference type="GO" id="GO:0005576">
    <property type="term" value="C:extracellular region"/>
    <property type="evidence" value="ECO:0007669"/>
    <property type="project" value="UniProtKB-SubCell"/>
</dbReference>
<dbReference type="GO" id="GO:0030430">
    <property type="term" value="C:host cell cytoplasm"/>
    <property type="evidence" value="ECO:0000314"/>
    <property type="project" value="UniProtKB"/>
</dbReference>
<dbReference type="GO" id="GO:0042025">
    <property type="term" value="C:host cell nucleus"/>
    <property type="evidence" value="ECO:0000314"/>
    <property type="project" value="UniProtKB"/>
</dbReference>
<dbReference type="InterPro" id="IPR048901">
    <property type="entry name" value="NleE/OspZ"/>
</dbReference>
<dbReference type="NCBIfam" id="NF033830">
    <property type="entry name" value="NleE_fam_methyl"/>
    <property type="match status" value="1"/>
</dbReference>
<dbReference type="Pfam" id="PF20798">
    <property type="entry name" value="NleE"/>
    <property type="match status" value="1"/>
</dbReference>
<accession>Q2TH00</accession>
<reference key="1">
    <citation type="journal article" date="2006" name="Sci. China, Ser. C, Life Sci.">
        <title>Comparison of the virulence plasmid genomes of two strains of Shigella which lost the ability to bind Congo red.</title>
        <authorList>
            <person name="Xiong Z."/>
            <person name="Tang X."/>
            <person name="Yang F."/>
            <person name="Zhang X."/>
            <person name="Yang J."/>
            <person name="Chen L."/>
            <person name="Nie H."/>
            <person name="Yan Y."/>
            <person name="Jiang Y."/>
            <person name="Wang J."/>
            <person name="Xue Y."/>
            <person name="Xu X."/>
            <person name="Zhu Y."/>
            <person name="Dong J."/>
            <person name="An L."/>
            <person name="Wang X."/>
            <person name="Jin Q."/>
        </authorList>
    </citation>
    <scope>NUCLEOTIDE SEQUENCE [GENOMIC DNA]</scope>
    <source>
        <plasmid>pSF5</plasmid>
    </source>
</reference>
<reference key="2">
    <citation type="journal article" date="2008" name="Infect. Immun.">
        <title>The NleE/OspZ family of effector proteins is required for polymorphonuclear transepithelial migration, a characteristic shared by enteropathogenic Escherichia coli and Shigella flexneri infections.</title>
        <authorList>
            <person name="Zurawski D.V."/>
            <person name="Mumy K.L."/>
            <person name="Badea L."/>
            <person name="Prentice J.A."/>
            <person name="Hartland E.L."/>
            <person name="McCormick B.A."/>
            <person name="Maurelli A.T."/>
        </authorList>
    </citation>
    <scope>SUBCELLULAR LOCATION</scope>
    <source>
        <strain>ATCC 700930 / 2457T / Serotype 2a</strain>
    </source>
</reference>
<reference key="3">
    <citation type="journal article" date="2010" name="PLoS Pathog.">
        <title>The type III effectors NleE and NleB from enteropathogenic E. coli and OspZ from Shigella block nuclear translocation of NF-kappaB p65.</title>
        <authorList>
            <person name="Newton H.J."/>
            <person name="Pearson J.S."/>
            <person name="Badea L."/>
            <person name="Kelly M."/>
            <person name="Lucas M."/>
            <person name="Holloway G."/>
            <person name="Wagstaff K.M."/>
            <person name="Dunstone M.A."/>
            <person name="Sloan J."/>
            <person name="Whisstock J.C."/>
            <person name="Kaper J.B."/>
            <person name="Robins-Browne R.M."/>
            <person name="Jans D.A."/>
            <person name="Frankel G."/>
            <person name="Phillips A.D."/>
            <person name="Coulson B.S."/>
            <person name="Hartland E.L."/>
        </authorList>
    </citation>
    <scope>FUNCTION</scope>
    <source>
        <strain>2104 / Serotype 2a</strain>
    </source>
</reference>
<name>OSPZ2_SHIFL</name>
<comment type="function">
    <text evidence="2 4">Inactive effector protein: in contrast to other members of the family, does not have the ability to inhibit host cell NF-kappa-B activation (PubMed:20485572). Probably lacks cysteine S-methyltransferase activity due to its inability to bind S-adenosyl-L-methionine at the C-terminus (Probable).</text>
</comment>
<comment type="subcellular location">
    <subcellularLocation>
        <location evidence="1">Secreted</location>
    </subcellularLocation>
    <subcellularLocation>
        <location evidence="1">Host cytoplasm</location>
    </subcellularLocation>
    <subcellularLocation>
        <location evidence="1">Host nucleus</location>
    </subcellularLocation>
    <text evidence="1">Secreted via the type III secretion system (T3SS) (PubMed:17984206). Mainly localizes in the cytoplasm of the infected cells, and occasionaly in the host nucleus (PubMed:17984206).</text>
</comment>
<comment type="similarity">
    <text evidence="4">Belongs to the NleE/OspZ family.</text>
</comment>
<comment type="caution">
    <text evidence="2 4">Probable inactive cysteine methyltransferase. In contrast to other members of the family, has a shorter C-terminus and is unable to inhibit host cell NF-kappa-B activation (PubMed:20485572).</text>
</comment>
<comment type="sequence caution" evidence="4">
    <conflict type="erroneous initiation">
        <sequence resource="EMBL-CDS" id="AAW64923"/>
    </conflict>
    <text>Extended N-terminus.</text>
</comment>
<protein>
    <recommendedName>
        <fullName evidence="4">Inactive cysteine S-methyltransferase OspZ</fullName>
    </recommendedName>
    <alternativeName>
        <fullName evidence="3">Protein ORF212</fullName>
    </alternativeName>
</protein>
<keyword id="KW-1035">Host cytoplasm</keyword>
<keyword id="KW-1048">Host nucleus</keyword>
<keyword id="KW-0614">Plasmid</keyword>
<keyword id="KW-0964">Secreted</keyword>
<keyword id="KW-0843">Virulence</keyword>
<gene>
    <name evidence="3" type="primary">ospZ</name>
    <name evidence="5" type="ORF">SFLP164</name>
</gene>
<geneLocation type="plasmid">
    <name>pSF5</name>
</geneLocation>